<feature type="chain" id="PRO_1000114991" description="Small ribosomal subunit protein uS2">
    <location>
        <begin position="1"/>
        <end position="233"/>
    </location>
</feature>
<protein>
    <recommendedName>
        <fullName evidence="1">Small ribosomal subunit protein uS2</fullName>
    </recommendedName>
    <alternativeName>
        <fullName evidence="2">30S ribosomal protein S2</fullName>
    </alternativeName>
</protein>
<comment type="similarity">
    <text evidence="1">Belongs to the universal ribosomal protein uS2 family.</text>
</comment>
<gene>
    <name evidence="1" type="primary">rpsB</name>
    <name type="ordered locus">BcerKBAB4_3650</name>
</gene>
<proteinExistence type="inferred from homology"/>
<dbReference type="EMBL" id="CP000903">
    <property type="protein sequence ID" value="ABY44821.1"/>
    <property type="molecule type" value="Genomic_DNA"/>
</dbReference>
<dbReference type="RefSeq" id="WP_002088178.1">
    <property type="nucleotide sequence ID" value="NZ_CAKMRX030000111.1"/>
</dbReference>
<dbReference type="SMR" id="A9VT65"/>
<dbReference type="GeneID" id="66266609"/>
<dbReference type="KEGG" id="bwe:BcerKBAB4_3650"/>
<dbReference type="eggNOG" id="COG0052">
    <property type="taxonomic scope" value="Bacteria"/>
</dbReference>
<dbReference type="HOGENOM" id="CLU_040318_1_2_9"/>
<dbReference type="Proteomes" id="UP000002154">
    <property type="component" value="Chromosome"/>
</dbReference>
<dbReference type="GO" id="GO:0022627">
    <property type="term" value="C:cytosolic small ribosomal subunit"/>
    <property type="evidence" value="ECO:0007669"/>
    <property type="project" value="TreeGrafter"/>
</dbReference>
<dbReference type="GO" id="GO:0003735">
    <property type="term" value="F:structural constituent of ribosome"/>
    <property type="evidence" value="ECO:0007669"/>
    <property type="project" value="InterPro"/>
</dbReference>
<dbReference type="GO" id="GO:0006412">
    <property type="term" value="P:translation"/>
    <property type="evidence" value="ECO:0007669"/>
    <property type="project" value="UniProtKB-UniRule"/>
</dbReference>
<dbReference type="CDD" id="cd01425">
    <property type="entry name" value="RPS2"/>
    <property type="match status" value="1"/>
</dbReference>
<dbReference type="FunFam" id="1.10.287.610:FF:000001">
    <property type="entry name" value="30S ribosomal protein S2"/>
    <property type="match status" value="1"/>
</dbReference>
<dbReference type="Gene3D" id="3.40.50.10490">
    <property type="entry name" value="Glucose-6-phosphate isomerase like protein, domain 1"/>
    <property type="match status" value="1"/>
</dbReference>
<dbReference type="Gene3D" id="1.10.287.610">
    <property type="entry name" value="Helix hairpin bin"/>
    <property type="match status" value="1"/>
</dbReference>
<dbReference type="HAMAP" id="MF_00291_B">
    <property type="entry name" value="Ribosomal_uS2_B"/>
    <property type="match status" value="1"/>
</dbReference>
<dbReference type="InterPro" id="IPR001865">
    <property type="entry name" value="Ribosomal_uS2"/>
</dbReference>
<dbReference type="InterPro" id="IPR005706">
    <property type="entry name" value="Ribosomal_uS2_bac/mit/plastid"/>
</dbReference>
<dbReference type="InterPro" id="IPR018130">
    <property type="entry name" value="Ribosomal_uS2_CS"/>
</dbReference>
<dbReference type="InterPro" id="IPR023591">
    <property type="entry name" value="Ribosomal_uS2_flav_dom_sf"/>
</dbReference>
<dbReference type="NCBIfam" id="TIGR01011">
    <property type="entry name" value="rpsB_bact"/>
    <property type="match status" value="1"/>
</dbReference>
<dbReference type="PANTHER" id="PTHR12534">
    <property type="entry name" value="30S RIBOSOMAL PROTEIN S2 PROKARYOTIC AND ORGANELLAR"/>
    <property type="match status" value="1"/>
</dbReference>
<dbReference type="PANTHER" id="PTHR12534:SF0">
    <property type="entry name" value="SMALL RIBOSOMAL SUBUNIT PROTEIN US2M"/>
    <property type="match status" value="1"/>
</dbReference>
<dbReference type="Pfam" id="PF00318">
    <property type="entry name" value="Ribosomal_S2"/>
    <property type="match status" value="1"/>
</dbReference>
<dbReference type="PRINTS" id="PR00395">
    <property type="entry name" value="RIBOSOMALS2"/>
</dbReference>
<dbReference type="SUPFAM" id="SSF52313">
    <property type="entry name" value="Ribosomal protein S2"/>
    <property type="match status" value="1"/>
</dbReference>
<dbReference type="PROSITE" id="PS00962">
    <property type="entry name" value="RIBOSOMAL_S2_1"/>
    <property type="match status" value="1"/>
</dbReference>
<dbReference type="PROSITE" id="PS00963">
    <property type="entry name" value="RIBOSOMAL_S2_2"/>
    <property type="match status" value="1"/>
</dbReference>
<evidence type="ECO:0000255" key="1">
    <source>
        <dbReference type="HAMAP-Rule" id="MF_00291"/>
    </source>
</evidence>
<evidence type="ECO:0000305" key="2"/>
<reference key="1">
    <citation type="journal article" date="2008" name="Chem. Biol. Interact.">
        <title>Extending the Bacillus cereus group genomics to putative food-borne pathogens of different toxicity.</title>
        <authorList>
            <person name="Lapidus A."/>
            <person name="Goltsman E."/>
            <person name="Auger S."/>
            <person name="Galleron N."/>
            <person name="Segurens B."/>
            <person name="Dossat C."/>
            <person name="Land M.L."/>
            <person name="Broussolle V."/>
            <person name="Brillard J."/>
            <person name="Guinebretiere M.-H."/>
            <person name="Sanchis V."/>
            <person name="Nguen-the C."/>
            <person name="Lereclus D."/>
            <person name="Richardson P."/>
            <person name="Wincker P."/>
            <person name="Weissenbach J."/>
            <person name="Ehrlich S.D."/>
            <person name="Sorokin A."/>
        </authorList>
    </citation>
    <scope>NUCLEOTIDE SEQUENCE [LARGE SCALE GENOMIC DNA]</scope>
    <source>
        <strain>KBAB4</strain>
    </source>
</reference>
<accession>A9VT65</accession>
<organism>
    <name type="scientific">Bacillus mycoides (strain KBAB4)</name>
    <name type="common">Bacillus weihenstephanensis</name>
    <dbReference type="NCBI Taxonomy" id="315730"/>
    <lineage>
        <taxon>Bacteria</taxon>
        <taxon>Bacillati</taxon>
        <taxon>Bacillota</taxon>
        <taxon>Bacilli</taxon>
        <taxon>Bacillales</taxon>
        <taxon>Bacillaceae</taxon>
        <taxon>Bacillus</taxon>
        <taxon>Bacillus cereus group</taxon>
    </lineage>
</organism>
<name>RS2_BACMK</name>
<sequence length="233" mass="26607">MSVISMKQLLEAGVHFGHQTRRWNPKMKRYIFTERNGIYIIDLQKTVKKVEEAYRTMRDIAAEGGDILFVGTKKQAQEAIKEEATRAGMYFVNQRWLGGTLTNFQTIQKRIKRLKDIERMQEDGTFEVLPKKEVVQLKKELERLEKFLGGIKDMKGLPSALFIVDPRKERIAVAEARKLHIPIIGIVDTNCDPDEIDHVIPANDDAIRAVKLLTSKMADAILETKQGEETVTA</sequence>
<keyword id="KW-0687">Ribonucleoprotein</keyword>
<keyword id="KW-0689">Ribosomal protein</keyword>